<keyword id="KW-0378">Hydrolase</keyword>
<evidence type="ECO:0000255" key="1">
    <source>
        <dbReference type="HAMAP-Rule" id="MF_00313"/>
    </source>
</evidence>
<gene>
    <name evidence="1" type="primary">glsA</name>
    <name type="ordered locus">BruAb2_0841</name>
</gene>
<reference key="1">
    <citation type="journal article" date="2005" name="J. Bacteriol.">
        <title>Completion of the genome sequence of Brucella abortus and comparison to the highly similar genomes of Brucella melitensis and Brucella suis.</title>
        <authorList>
            <person name="Halling S.M."/>
            <person name="Peterson-Burch B.D."/>
            <person name="Bricker B.J."/>
            <person name="Zuerner R.L."/>
            <person name="Qing Z."/>
            <person name="Li L.-L."/>
            <person name="Kapur V."/>
            <person name="Alt D.P."/>
            <person name="Olsen S.C."/>
        </authorList>
    </citation>
    <scope>NUCLEOTIDE SEQUENCE [LARGE SCALE GENOMIC DNA]</scope>
    <source>
        <strain>9-941</strain>
    </source>
</reference>
<accession>Q577F0</accession>
<sequence>MSSSSDAIKAALEKGRAAGLSATGGKNADYIPFLASVPSDLFGLAVVTADGQTFKTGDADIAFAIESISKVFTLALVMEEIGPDSVREKVGADPTGLPFNSVIALELHNGKSLSPLVNAGAIATASLVPGDTADARWNNILECQCGFAGRRLKLSNEVNQSEQTTNFHNRAIAWLLYSAGTCYSDPMEAVDIYTRQCSTLVTATDLATMGATLAAGGVNPISGKRMVSAGNVAPILVEMTMEGLYTALGDWAYTVGLPGKSGVGGGIMAVVPGELAIAAFSPPLDPAGNSVKAMAAVAAVADSLGHNLYTTRGKVSS</sequence>
<dbReference type="EC" id="3.5.1.2" evidence="1"/>
<dbReference type="EMBL" id="AE017224">
    <property type="protein sequence ID" value="AAX76234.1"/>
    <property type="molecule type" value="Genomic_DNA"/>
</dbReference>
<dbReference type="RefSeq" id="WP_002967336.1">
    <property type="nucleotide sequence ID" value="NC_006933.1"/>
</dbReference>
<dbReference type="SMR" id="Q577F0"/>
<dbReference type="DNASU" id="3827366"/>
<dbReference type="EnsemblBacteria" id="AAX76234">
    <property type="protein sequence ID" value="AAX76234"/>
    <property type="gene ID" value="BruAb2_0841"/>
</dbReference>
<dbReference type="GeneID" id="93015291"/>
<dbReference type="KEGG" id="bmb:BruAb2_0841"/>
<dbReference type="HOGENOM" id="CLU_027932_1_0_5"/>
<dbReference type="Proteomes" id="UP000000540">
    <property type="component" value="Chromosome II"/>
</dbReference>
<dbReference type="GO" id="GO:0004359">
    <property type="term" value="F:glutaminase activity"/>
    <property type="evidence" value="ECO:0007669"/>
    <property type="project" value="UniProtKB-UniRule"/>
</dbReference>
<dbReference type="GO" id="GO:0006537">
    <property type="term" value="P:glutamate biosynthetic process"/>
    <property type="evidence" value="ECO:0007669"/>
    <property type="project" value="TreeGrafter"/>
</dbReference>
<dbReference type="GO" id="GO:0006543">
    <property type="term" value="P:glutamine catabolic process"/>
    <property type="evidence" value="ECO:0007669"/>
    <property type="project" value="TreeGrafter"/>
</dbReference>
<dbReference type="Gene3D" id="3.40.710.10">
    <property type="entry name" value="DD-peptidase/beta-lactamase superfamily"/>
    <property type="match status" value="1"/>
</dbReference>
<dbReference type="HAMAP" id="MF_00313">
    <property type="entry name" value="Glutaminase"/>
    <property type="match status" value="1"/>
</dbReference>
<dbReference type="InterPro" id="IPR012338">
    <property type="entry name" value="Beta-lactam/transpept-like"/>
</dbReference>
<dbReference type="InterPro" id="IPR015868">
    <property type="entry name" value="Glutaminase"/>
</dbReference>
<dbReference type="NCBIfam" id="TIGR03814">
    <property type="entry name" value="Gln_ase"/>
    <property type="match status" value="1"/>
</dbReference>
<dbReference type="NCBIfam" id="NF009020">
    <property type="entry name" value="PRK12356.1"/>
    <property type="match status" value="1"/>
</dbReference>
<dbReference type="PANTHER" id="PTHR12544">
    <property type="entry name" value="GLUTAMINASE"/>
    <property type="match status" value="1"/>
</dbReference>
<dbReference type="PANTHER" id="PTHR12544:SF48">
    <property type="entry name" value="GLUTAMINASE 1"/>
    <property type="match status" value="1"/>
</dbReference>
<dbReference type="Pfam" id="PF04960">
    <property type="entry name" value="Glutaminase"/>
    <property type="match status" value="1"/>
</dbReference>
<dbReference type="SUPFAM" id="SSF56601">
    <property type="entry name" value="beta-lactamase/transpeptidase-like"/>
    <property type="match status" value="1"/>
</dbReference>
<feature type="chain" id="PRO_1000048328" description="Glutaminase">
    <location>
        <begin position="1"/>
        <end position="317"/>
    </location>
</feature>
<feature type="binding site" evidence="1">
    <location>
        <position position="67"/>
    </location>
    <ligand>
        <name>substrate</name>
    </ligand>
</feature>
<feature type="binding site" evidence="1">
    <location>
        <position position="118"/>
    </location>
    <ligand>
        <name>substrate</name>
    </ligand>
</feature>
<feature type="binding site" evidence="1">
    <location>
        <position position="162"/>
    </location>
    <ligand>
        <name>substrate</name>
    </ligand>
</feature>
<feature type="binding site" evidence="1">
    <location>
        <position position="169"/>
    </location>
    <ligand>
        <name>substrate</name>
    </ligand>
</feature>
<feature type="binding site" evidence="1">
    <location>
        <position position="193"/>
    </location>
    <ligand>
        <name>substrate</name>
    </ligand>
</feature>
<feature type="binding site" evidence="1">
    <location>
        <position position="245"/>
    </location>
    <ligand>
        <name>substrate</name>
    </ligand>
</feature>
<feature type="binding site" evidence="1">
    <location>
        <position position="263"/>
    </location>
    <ligand>
        <name>substrate</name>
    </ligand>
</feature>
<comment type="catalytic activity">
    <reaction evidence="1">
        <text>L-glutamine + H2O = L-glutamate + NH4(+)</text>
        <dbReference type="Rhea" id="RHEA:15889"/>
        <dbReference type="ChEBI" id="CHEBI:15377"/>
        <dbReference type="ChEBI" id="CHEBI:28938"/>
        <dbReference type="ChEBI" id="CHEBI:29985"/>
        <dbReference type="ChEBI" id="CHEBI:58359"/>
        <dbReference type="EC" id="3.5.1.2"/>
    </reaction>
</comment>
<comment type="subunit">
    <text evidence="1">Homotetramer.</text>
</comment>
<comment type="similarity">
    <text evidence="1">Belongs to the glutaminase family.</text>
</comment>
<proteinExistence type="inferred from homology"/>
<protein>
    <recommendedName>
        <fullName evidence="1">Glutaminase</fullName>
        <ecNumber evidence="1">3.5.1.2</ecNumber>
    </recommendedName>
</protein>
<name>GLSA_BRUAB</name>
<organism>
    <name type="scientific">Brucella abortus biovar 1 (strain 9-941)</name>
    <dbReference type="NCBI Taxonomy" id="262698"/>
    <lineage>
        <taxon>Bacteria</taxon>
        <taxon>Pseudomonadati</taxon>
        <taxon>Pseudomonadota</taxon>
        <taxon>Alphaproteobacteria</taxon>
        <taxon>Hyphomicrobiales</taxon>
        <taxon>Brucellaceae</taxon>
        <taxon>Brucella/Ochrobactrum group</taxon>
        <taxon>Brucella</taxon>
    </lineage>
</organism>